<keyword id="KW-0963">Cytoplasm</keyword>
<keyword id="KW-0342">GTP-binding</keyword>
<keyword id="KW-0378">Hydrolase</keyword>
<keyword id="KW-0460">Magnesium</keyword>
<keyword id="KW-0479">Metal-binding</keyword>
<keyword id="KW-0547">Nucleotide-binding</keyword>
<keyword id="KW-1185">Reference proteome</keyword>
<evidence type="ECO:0000255" key="1">
    <source>
        <dbReference type="HAMAP-Rule" id="MF_01454"/>
    </source>
</evidence>
<evidence type="ECO:0000255" key="2">
    <source>
        <dbReference type="PROSITE-ProRule" id="PRU01229"/>
    </source>
</evidence>
<evidence type="ECO:0000255" key="3">
    <source>
        <dbReference type="PROSITE-ProRule" id="PRU01231"/>
    </source>
</evidence>
<evidence type="ECO:0000256" key="4">
    <source>
        <dbReference type="SAM" id="MobiDB-lite"/>
    </source>
</evidence>
<sequence length="534" mass="57177">MASFVDRVVLHVSGGSGGHGCVSVKREKFKPLGGPDGGNGGDGGNVILRVSHQTTTLLDYHHAPHRHASNGGQGMGDWRGGKQGETLILPVPDGTVVKTKDGEVLADLVGEGTEYVAAAGGQGGLGNSSLSSQKRRAPGFALLGVDGEASDIVLELKSIADIALVGFPSAGKSSLIAAMSAARPKIADYPFTTLIPNLGVVEAGEVRFTIADVPGLIEGASEGKGLGHHFLRHVERCTALVHVLDTATLESDRDPLSDLAIIEAELEKYAVDMSYAGVDGEVIPLNERPKLVALNKIDTPDGKDMAEFVRAELEGRGYRVFEVSASSHEGLRQLSFAMAELVTAARARATVVTAKITPPVLRPRAVNRKEFTIRPEERNLEPLFRVLGAKPVRWVKQTDFTNEEAIGYLAERLNKLGVEDGLFKKGAKPGDTVVIGEDGENAVVFDWEPTMMAGAELLSGPRGTDPRFTDLGDRPTRSQKREEYQERRDAKSAARAELESERKAGIWTESVSARRDREAHESREAASTDDGDAL</sequence>
<protein>
    <recommendedName>
        <fullName evidence="1">GTPase Obg</fullName>
        <ecNumber evidence="1">3.6.5.-</ecNumber>
    </recommendedName>
    <alternativeName>
        <fullName evidence="1">GTP-binding protein Obg</fullName>
    </alternativeName>
</protein>
<proteinExistence type="inferred from homology"/>
<gene>
    <name evidence="1" type="primary">obg</name>
    <name type="ordered locus">RSal33209_3247</name>
</gene>
<name>OBG_RENSM</name>
<dbReference type="EC" id="3.6.5.-" evidence="1"/>
<dbReference type="EMBL" id="CP000910">
    <property type="protein sequence ID" value="ABY24963.1"/>
    <property type="molecule type" value="Genomic_DNA"/>
</dbReference>
<dbReference type="RefSeq" id="WP_012246603.1">
    <property type="nucleotide sequence ID" value="NC_010168.1"/>
</dbReference>
<dbReference type="SMR" id="A9WUU2"/>
<dbReference type="STRING" id="288705.RSal33209_3247"/>
<dbReference type="KEGG" id="rsa:RSal33209_3247"/>
<dbReference type="eggNOG" id="COG0536">
    <property type="taxonomic scope" value="Bacteria"/>
</dbReference>
<dbReference type="HOGENOM" id="CLU_011747_1_1_11"/>
<dbReference type="Proteomes" id="UP000002007">
    <property type="component" value="Chromosome"/>
</dbReference>
<dbReference type="GO" id="GO:0005737">
    <property type="term" value="C:cytoplasm"/>
    <property type="evidence" value="ECO:0007669"/>
    <property type="project" value="UniProtKB-SubCell"/>
</dbReference>
<dbReference type="GO" id="GO:0005525">
    <property type="term" value="F:GTP binding"/>
    <property type="evidence" value="ECO:0007669"/>
    <property type="project" value="UniProtKB-UniRule"/>
</dbReference>
<dbReference type="GO" id="GO:0003924">
    <property type="term" value="F:GTPase activity"/>
    <property type="evidence" value="ECO:0007669"/>
    <property type="project" value="UniProtKB-UniRule"/>
</dbReference>
<dbReference type="GO" id="GO:0000287">
    <property type="term" value="F:magnesium ion binding"/>
    <property type="evidence" value="ECO:0007669"/>
    <property type="project" value="InterPro"/>
</dbReference>
<dbReference type="GO" id="GO:0042254">
    <property type="term" value="P:ribosome biogenesis"/>
    <property type="evidence" value="ECO:0007669"/>
    <property type="project" value="UniProtKB-UniRule"/>
</dbReference>
<dbReference type="CDD" id="cd01898">
    <property type="entry name" value="Obg"/>
    <property type="match status" value="1"/>
</dbReference>
<dbReference type="FunFam" id="2.70.210.12:FF:000001">
    <property type="entry name" value="GTPase Obg"/>
    <property type="match status" value="1"/>
</dbReference>
<dbReference type="Gene3D" id="3.30.300.350">
    <property type="entry name" value="GTP-binding protein OBG, C-terminal domain"/>
    <property type="match status" value="1"/>
</dbReference>
<dbReference type="Gene3D" id="2.70.210.12">
    <property type="entry name" value="GTP1/OBG domain"/>
    <property type="match status" value="1"/>
</dbReference>
<dbReference type="Gene3D" id="3.40.50.300">
    <property type="entry name" value="P-loop containing nucleotide triphosphate hydrolases"/>
    <property type="match status" value="1"/>
</dbReference>
<dbReference type="HAMAP" id="MF_01454">
    <property type="entry name" value="GTPase_Obg"/>
    <property type="match status" value="1"/>
</dbReference>
<dbReference type="InterPro" id="IPR031167">
    <property type="entry name" value="G_OBG"/>
</dbReference>
<dbReference type="InterPro" id="IPR006073">
    <property type="entry name" value="GTP-bd"/>
</dbReference>
<dbReference type="InterPro" id="IPR014100">
    <property type="entry name" value="GTP-bd_Obg/CgtA"/>
</dbReference>
<dbReference type="InterPro" id="IPR036346">
    <property type="entry name" value="GTP-bd_prot_GTP1/OBG_C_sf"/>
</dbReference>
<dbReference type="InterPro" id="IPR006074">
    <property type="entry name" value="GTP1-OBG_CS"/>
</dbReference>
<dbReference type="InterPro" id="IPR006169">
    <property type="entry name" value="GTP1_OBG_dom"/>
</dbReference>
<dbReference type="InterPro" id="IPR036726">
    <property type="entry name" value="GTP1_OBG_dom_sf"/>
</dbReference>
<dbReference type="InterPro" id="IPR045086">
    <property type="entry name" value="OBG_GTPase"/>
</dbReference>
<dbReference type="InterPro" id="IPR015349">
    <property type="entry name" value="OCT_dom"/>
</dbReference>
<dbReference type="InterPro" id="IPR027417">
    <property type="entry name" value="P-loop_NTPase"/>
</dbReference>
<dbReference type="NCBIfam" id="TIGR02729">
    <property type="entry name" value="Obg_CgtA"/>
    <property type="match status" value="1"/>
</dbReference>
<dbReference type="NCBIfam" id="TIGR03595">
    <property type="entry name" value="Obg_CgtA_exten"/>
    <property type="match status" value="1"/>
</dbReference>
<dbReference type="NCBIfam" id="NF008954">
    <property type="entry name" value="PRK12296.1"/>
    <property type="match status" value="1"/>
</dbReference>
<dbReference type="NCBIfam" id="NF008955">
    <property type="entry name" value="PRK12297.1"/>
    <property type="match status" value="1"/>
</dbReference>
<dbReference type="NCBIfam" id="NF008956">
    <property type="entry name" value="PRK12299.1"/>
    <property type="match status" value="1"/>
</dbReference>
<dbReference type="PANTHER" id="PTHR11702">
    <property type="entry name" value="DEVELOPMENTALLY REGULATED GTP-BINDING PROTEIN-RELATED"/>
    <property type="match status" value="1"/>
</dbReference>
<dbReference type="PANTHER" id="PTHR11702:SF31">
    <property type="entry name" value="MITOCHONDRIAL RIBOSOME-ASSOCIATED GTPASE 2"/>
    <property type="match status" value="1"/>
</dbReference>
<dbReference type="Pfam" id="PF09269">
    <property type="entry name" value="DUF1967"/>
    <property type="match status" value="1"/>
</dbReference>
<dbReference type="Pfam" id="PF01018">
    <property type="entry name" value="GTP1_OBG"/>
    <property type="match status" value="1"/>
</dbReference>
<dbReference type="Pfam" id="PF01926">
    <property type="entry name" value="MMR_HSR1"/>
    <property type="match status" value="1"/>
</dbReference>
<dbReference type="PRINTS" id="PR00326">
    <property type="entry name" value="GTP1OBG"/>
</dbReference>
<dbReference type="SUPFAM" id="SSF102741">
    <property type="entry name" value="Obg GTP-binding protein C-terminal domain"/>
    <property type="match status" value="1"/>
</dbReference>
<dbReference type="SUPFAM" id="SSF82051">
    <property type="entry name" value="Obg GTP-binding protein N-terminal domain"/>
    <property type="match status" value="1"/>
</dbReference>
<dbReference type="SUPFAM" id="SSF52540">
    <property type="entry name" value="P-loop containing nucleoside triphosphate hydrolases"/>
    <property type="match status" value="1"/>
</dbReference>
<dbReference type="PROSITE" id="PS51710">
    <property type="entry name" value="G_OBG"/>
    <property type="match status" value="1"/>
</dbReference>
<dbReference type="PROSITE" id="PS00905">
    <property type="entry name" value="GTP1_OBG"/>
    <property type="match status" value="1"/>
</dbReference>
<dbReference type="PROSITE" id="PS51883">
    <property type="entry name" value="OBG"/>
    <property type="match status" value="1"/>
</dbReference>
<dbReference type="PROSITE" id="PS51881">
    <property type="entry name" value="OCT"/>
    <property type="match status" value="1"/>
</dbReference>
<comment type="function">
    <text evidence="1">An essential GTPase which binds GTP, GDP and possibly (p)ppGpp with moderate affinity, with high nucleotide exchange rates and a fairly low GTP hydrolysis rate. Plays a role in control of the cell cycle, stress response, ribosome biogenesis and in those bacteria that undergo differentiation, in morphogenesis control.</text>
</comment>
<comment type="cofactor">
    <cofactor evidence="1">
        <name>Mg(2+)</name>
        <dbReference type="ChEBI" id="CHEBI:18420"/>
    </cofactor>
</comment>
<comment type="subunit">
    <text evidence="1">Monomer.</text>
</comment>
<comment type="subcellular location">
    <subcellularLocation>
        <location evidence="1">Cytoplasm</location>
    </subcellularLocation>
</comment>
<comment type="similarity">
    <text evidence="1">Belongs to the TRAFAC class OBG-HflX-like GTPase superfamily. OBG GTPase family.</text>
</comment>
<organism>
    <name type="scientific">Renibacterium salmoninarum (strain ATCC 33209 / DSM 20767 / JCM 11484 / NBRC 15589 / NCIMB 2235)</name>
    <dbReference type="NCBI Taxonomy" id="288705"/>
    <lineage>
        <taxon>Bacteria</taxon>
        <taxon>Bacillati</taxon>
        <taxon>Actinomycetota</taxon>
        <taxon>Actinomycetes</taxon>
        <taxon>Micrococcales</taxon>
        <taxon>Micrococcaceae</taxon>
        <taxon>Renibacterium</taxon>
    </lineage>
</organism>
<accession>A9WUU2</accession>
<feature type="chain" id="PRO_0000386174" description="GTPase Obg">
    <location>
        <begin position="1"/>
        <end position="534"/>
    </location>
</feature>
<feature type="domain" description="Obg" evidence="3">
    <location>
        <begin position="2"/>
        <end position="159"/>
    </location>
</feature>
<feature type="domain" description="OBG-type G" evidence="1">
    <location>
        <begin position="160"/>
        <end position="343"/>
    </location>
</feature>
<feature type="domain" description="OCT" evidence="2">
    <location>
        <begin position="363"/>
        <end position="449"/>
    </location>
</feature>
<feature type="region of interest" description="Disordered" evidence="4">
    <location>
        <begin position="63"/>
        <end position="82"/>
    </location>
</feature>
<feature type="region of interest" description="Disordered" evidence="4">
    <location>
        <begin position="456"/>
        <end position="534"/>
    </location>
</feature>
<feature type="compositionally biased region" description="Gly residues" evidence="4">
    <location>
        <begin position="71"/>
        <end position="82"/>
    </location>
</feature>
<feature type="compositionally biased region" description="Basic and acidic residues" evidence="4">
    <location>
        <begin position="464"/>
        <end position="504"/>
    </location>
</feature>
<feature type="compositionally biased region" description="Basic and acidic residues" evidence="4">
    <location>
        <begin position="512"/>
        <end position="526"/>
    </location>
</feature>
<feature type="binding site" evidence="1">
    <location>
        <begin position="166"/>
        <end position="173"/>
    </location>
    <ligand>
        <name>GTP</name>
        <dbReference type="ChEBI" id="CHEBI:37565"/>
    </ligand>
</feature>
<feature type="binding site" evidence="1">
    <location>
        <position position="173"/>
    </location>
    <ligand>
        <name>Mg(2+)</name>
        <dbReference type="ChEBI" id="CHEBI:18420"/>
    </ligand>
</feature>
<feature type="binding site" evidence="1">
    <location>
        <begin position="191"/>
        <end position="195"/>
    </location>
    <ligand>
        <name>GTP</name>
        <dbReference type="ChEBI" id="CHEBI:37565"/>
    </ligand>
</feature>
<feature type="binding site" evidence="1">
    <location>
        <position position="193"/>
    </location>
    <ligand>
        <name>Mg(2+)</name>
        <dbReference type="ChEBI" id="CHEBI:18420"/>
    </ligand>
</feature>
<feature type="binding site" evidence="1">
    <location>
        <begin position="212"/>
        <end position="215"/>
    </location>
    <ligand>
        <name>GTP</name>
        <dbReference type="ChEBI" id="CHEBI:37565"/>
    </ligand>
</feature>
<feature type="binding site" evidence="1">
    <location>
        <begin position="295"/>
        <end position="298"/>
    </location>
    <ligand>
        <name>GTP</name>
        <dbReference type="ChEBI" id="CHEBI:37565"/>
    </ligand>
</feature>
<feature type="binding site" evidence="1">
    <location>
        <begin position="324"/>
        <end position="326"/>
    </location>
    <ligand>
        <name>GTP</name>
        <dbReference type="ChEBI" id="CHEBI:37565"/>
    </ligand>
</feature>
<reference key="1">
    <citation type="journal article" date="2008" name="J. Bacteriol.">
        <title>Genome sequence of the fish pathogen Renibacterium salmoninarum suggests reductive evolution away from an environmental Arthrobacter ancestor.</title>
        <authorList>
            <person name="Wiens G.D."/>
            <person name="Rockey D.D."/>
            <person name="Wu Z."/>
            <person name="Chang J."/>
            <person name="Levy R."/>
            <person name="Crane S."/>
            <person name="Chen D.S."/>
            <person name="Capri G.R."/>
            <person name="Burnett J.R."/>
            <person name="Sudheesh P.S."/>
            <person name="Schipma M.J."/>
            <person name="Burd H."/>
            <person name="Bhattacharyya A."/>
            <person name="Rhodes L.D."/>
            <person name="Kaul R."/>
            <person name="Strom M.S."/>
        </authorList>
    </citation>
    <scope>NUCLEOTIDE SEQUENCE [LARGE SCALE GENOMIC DNA]</scope>
    <source>
        <strain>ATCC 33209 / DSM 20767 / JCM 11484 / NBRC 15589 / NCIMB 2235</strain>
    </source>
</reference>